<proteinExistence type="inferred from homology"/>
<accession>Q9LFZ8</accession>
<accession>F4I1W3</accession>
<comment type="function">
    <text evidence="1">Vacuolar cation/proton exchanger (CAX). Translocates Ca(2+) and other metal ions into vacuoles using the proton gradient formed by H(+)-ATPase and H(+)-pyrophosphatase (By similarity).</text>
</comment>
<comment type="subcellular location">
    <subcellularLocation>
        <location evidence="3">Vacuole membrane</location>
        <topology evidence="3">Multi-pass membrane protein</topology>
    </subcellularLocation>
    <text>Tonoplast.</text>
</comment>
<comment type="similarity">
    <text evidence="3">Belongs to the Ca(2+):cation antiporter (CaCA) (TC 2.A.19) family. Cation/proton exchanger (CAX) subfamily.</text>
</comment>
<comment type="sequence caution" evidence="3">
    <conflict type="erroneous gene model prediction">
        <sequence resource="EMBL-CDS" id="AAF79505"/>
    </conflict>
</comment>
<comment type="sequence caution" evidence="3">
    <conflict type="erroneous gene model prediction">
        <sequence resource="EMBL-CDS" id="AEE33289"/>
    </conflict>
</comment>
<gene>
    <name type="primary">CAX6</name>
    <name type="ordered locus">At1g55720</name>
    <name type="ORF">F20N2.13</name>
    <name type="ORF">F20N2.23</name>
</gene>
<reference key="1">
    <citation type="journal article" date="2000" name="Nature">
        <title>Sequence and analysis of chromosome 1 of the plant Arabidopsis thaliana.</title>
        <authorList>
            <person name="Theologis A."/>
            <person name="Ecker J.R."/>
            <person name="Palm C.J."/>
            <person name="Federspiel N.A."/>
            <person name="Kaul S."/>
            <person name="White O."/>
            <person name="Alonso J."/>
            <person name="Altafi H."/>
            <person name="Araujo R."/>
            <person name="Bowman C.L."/>
            <person name="Brooks S.Y."/>
            <person name="Buehler E."/>
            <person name="Chan A."/>
            <person name="Chao Q."/>
            <person name="Chen H."/>
            <person name="Cheuk R.F."/>
            <person name="Chin C.W."/>
            <person name="Chung M.K."/>
            <person name="Conn L."/>
            <person name="Conway A.B."/>
            <person name="Conway A.R."/>
            <person name="Creasy T.H."/>
            <person name="Dewar K."/>
            <person name="Dunn P."/>
            <person name="Etgu P."/>
            <person name="Feldblyum T.V."/>
            <person name="Feng J.-D."/>
            <person name="Fong B."/>
            <person name="Fujii C.Y."/>
            <person name="Gill J.E."/>
            <person name="Goldsmith A.D."/>
            <person name="Haas B."/>
            <person name="Hansen N.F."/>
            <person name="Hughes B."/>
            <person name="Huizar L."/>
            <person name="Hunter J.L."/>
            <person name="Jenkins J."/>
            <person name="Johnson-Hopson C."/>
            <person name="Khan S."/>
            <person name="Khaykin E."/>
            <person name="Kim C.J."/>
            <person name="Koo H.L."/>
            <person name="Kremenetskaia I."/>
            <person name="Kurtz D.B."/>
            <person name="Kwan A."/>
            <person name="Lam B."/>
            <person name="Langin-Hooper S."/>
            <person name="Lee A."/>
            <person name="Lee J.M."/>
            <person name="Lenz C.A."/>
            <person name="Li J.H."/>
            <person name="Li Y.-P."/>
            <person name="Lin X."/>
            <person name="Liu S.X."/>
            <person name="Liu Z.A."/>
            <person name="Luros J.S."/>
            <person name="Maiti R."/>
            <person name="Marziali A."/>
            <person name="Militscher J."/>
            <person name="Miranda M."/>
            <person name="Nguyen M."/>
            <person name="Nierman W.C."/>
            <person name="Osborne B.I."/>
            <person name="Pai G."/>
            <person name="Peterson J."/>
            <person name="Pham P.K."/>
            <person name="Rizzo M."/>
            <person name="Rooney T."/>
            <person name="Rowley D."/>
            <person name="Sakano H."/>
            <person name="Salzberg S.L."/>
            <person name="Schwartz J.R."/>
            <person name="Shinn P."/>
            <person name="Southwick A.M."/>
            <person name="Sun H."/>
            <person name="Tallon L.J."/>
            <person name="Tambunga G."/>
            <person name="Toriumi M.J."/>
            <person name="Town C.D."/>
            <person name="Utterback T."/>
            <person name="Van Aken S."/>
            <person name="Vaysberg M."/>
            <person name="Vysotskaia V.S."/>
            <person name="Walker M."/>
            <person name="Wu D."/>
            <person name="Yu G."/>
            <person name="Fraser C.M."/>
            <person name="Venter J.C."/>
            <person name="Davis R.W."/>
        </authorList>
    </citation>
    <scope>NUCLEOTIDE SEQUENCE [LARGE SCALE GENOMIC DNA]</scope>
    <source>
        <strain>cv. Columbia</strain>
    </source>
</reference>
<reference key="2">
    <citation type="journal article" date="2017" name="Plant J.">
        <title>Araport11: a complete reannotation of the Arabidopsis thaliana reference genome.</title>
        <authorList>
            <person name="Cheng C.Y."/>
            <person name="Krishnakumar V."/>
            <person name="Chan A.P."/>
            <person name="Thibaud-Nissen F."/>
            <person name="Schobel S."/>
            <person name="Town C.D."/>
        </authorList>
    </citation>
    <scope>GENOME REANNOTATION</scope>
    <source>
        <strain>cv. Columbia</strain>
    </source>
</reference>
<reference key="3">
    <citation type="journal article" date="2001" name="Plant Physiol.">
        <title>Phylogenetic relationships within cation transporter families of Arabidopsis.</title>
        <authorList>
            <person name="Maeser P."/>
            <person name="Thomine S."/>
            <person name="Schroeder J.I."/>
            <person name="Ward J.M."/>
            <person name="Hirschi K."/>
            <person name="Sze H."/>
            <person name="Talke I.N."/>
            <person name="Amtmann A."/>
            <person name="Maathuis F.J.M."/>
            <person name="Sanders D."/>
            <person name="Harper J.F."/>
            <person name="Tchieu J."/>
            <person name="Gribskov M."/>
            <person name="Persans M.W."/>
            <person name="Salt D.E."/>
            <person name="Kim S.A."/>
            <person name="Guerinot M.L."/>
        </authorList>
    </citation>
    <scope>GENE FAMILY</scope>
    <scope>NOMENCLATURE</scope>
</reference>
<keyword id="KW-0050">Antiport</keyword>
<keyword id="KW-0106">Calcium</keyword>
<keyword id="KW-0109">Calcium transport</keyword>
<keyword id="KW-0406">Ion transport</keyword>
<keyword id="KW-0472">Membrane</keyword>
<keyword id="KW-1185">Reference proteome</keyword>
<keyword id="KW-0812">Transmembrane</keyword>
<keyword id="KW-1133">Transmembrane helix</keyword>
<keyword id="KW-0813">Transport</keyword>
<keyword id="KW-0926">Vacuole</keyword>
<dbReference type="EMBL" id="AC002328">
    <property type="protein sequence ID" value="AAF79505.1"/>
    <property type="status" value="ALT_SEQ"/>
    <property type="molecule type" value="Genomic_DNA"/>
</dbReference>
<dbReference type="EMBL" id="CP002684">
    <property type="protein sequence ID" value="AEE33289.1"/>
    <property type="status" value="ALT_SEQ"/>
    <property type="molecule type" value="Genomic_DNA"/>
</dbReference>
<dbReference type="EMBL" id="CP002684">
    <property type="protein sequence ID" value="ANM58202.1"/>
    <property type="molecule type" value="Genomic_DNA"/>
</dbReference>
<dbReference type="RefSeq" id="NP_001320656.1">
    <property type="nucleotide sequence ID" value="NM_001333724.1"/>
</dbReference>
<dbReference type="RefSeq" id="NP_175968.4">
    <property type="nucleotide sequence ID" value="NM_104448.4"/>
</dbReference>
<dbReference type="SMR" id="Q9LFZ8"/>
<dbReference type="FunCoup" id="Q9LFZ8">
    <property type="interactions" value="34"/>
</dbReference>
<dbReference type="STRING" id="3702.Q9LFZ8"/>
<dbReference type="PaxDb" id="3702-AT1G55720.1"/>
<dbReference type="EnsemblPlants" id="AT1G55720.2">
    <property type="protein sequence ID" value="AT1G55720.2"/>
    <property type="gene ID" value="AT1G55720"/>
</dbReference>
<dbReference type="GeneID" id="842021"/>
<dbReference type="Gramene" id="AT1G55720.2">
    <property type="protein sequence ID" value="AT1G55720.2"/>
    <property type="gene ID" value="AT1G55720"/>
</dbReference>
<dbReference type="KEGG" id="ath:AT1G55720"/>
<dbReference type="Araport" id="AT1G55720"/>
<dbReference type="TAIR" id="AT1G55720">
    <property type="gene designation" value="CAX6"/>
</dbReference>
<dbReference type="eggNOG" id="KOG1397">
    <property type="taxonomic scope" value="Eukaryota"/>
</dbReference>
<dbReference type="HOGENOM" id="CLU_008721_2_1_1"/>
<dbReference type="InParanoid" id="Q9LFZ8"/>
<dbReference type="OMA" id="CGCEFRI"/>
<dbReference type="PhylomeDB" id="Q9LFZ8"/>
<dbReference type="PRO" id="PR:Q9LFZ8"/>
<dbReference type="Proteomes" id="UP000006548">
    <property type="component" value="Chromosome 1"/>
</dbReference>
<dbReference type="ExpressionAtlas" id="Q9LFZ8">
    <property type="expression patterns" value="baseline and differential"/>
</dbReference>
<dbReference type="GO" id="GO:0005774">
    <property type="term" value="C:vacuolar membrane"/>
    <property type="evidence" value="ECO:0007669"/>
    <property type="project" value="UniProtKB-SubCell"/>
</dbReference>
<dbReference type="GO" id="GO:0015369">
    <property type="term" value="F:calcium:proton antiporter activity"/>
    <property type="evidence" value="ECO:0007669"/>
    <property type="project" value="InterPro"/>
</dbReference>
<dbReference type="FunFam" id="1.20.1420.30:FF:000008">
    <property type="entry name" value="Vacuolar cation/proton exchanger"/>
    <property type="match status" value="1"/>
</dbReference>
<dbReference type="FunFam" id="1.20.1420.30:FF:000012">
    <property type="entry name" value="Vacuolar cation/proton exchanger"/>
    <property type="match status" value="1"/>
</dbReference>
<dbReference type="Gene3D" id="1.20.1420.30">
    <property type="entry name" value="NCX, central ion-binding region"/>
    <property type="match status" value="2"/>
</dbReference>
<dbReference type="InterPro" id="IPR004713">
    <property type="entry name" value="CaH_exchang"/>
</dbReference>
<dbReference type="InterPro" id="IPR004798">
    <property type="entry name" value="CAX-like"/>
</dbReference>
<dbReference type="InterPro" id="IPR004837">
    <property type="entry name" value="NaCa_Exmemb"/>
</dbReference>
<dbReference type="InterPro" id="IPR044880">
    <property type="entry name" value="NCX_ion-bd_dom_sf"/>
</dbReference>
<dbReference type="NCBIfam" id="TIGR00846">
    <property type="entry name" value="caca2"/>
    <property type="match status" value="1"/>
</dbReference>
<dbReference type="NCBIfam" id="TIGR00378">
    <property type="entry name" value="cax"/>
    <property type="match status" value="1"/>
</dbReference>
<dbReference type="PANTHER" id="PTHR31503">
    <property type="entry name" value="VACUOLAR CALCIUM ION TRANSPORTER"/>
    <property type="match status" value="1"/>
</dbReference>
<dbReference type="PANTHER" id="PTHR31503:SF90">
    <property type="entry name" value="VACUOLAR CATION_PROTON EXCHANGER 5-RELATED"/>
    <property type="match status" value="1"/>
</dbReference>
<dbReference type="Pfam" id="PF01699">
    <property type="entry name" value="Na_Ca_ex"/>
    <property type="match status" value="2"/>
</dbReference>
<sequence>MYMELYLMFSNFFKSIRWCKVPAFMQAKVEMGLVNEVELKSLLEQETDSPQTNAASLMEQGSLRERRAKAPRNSVVQSFKIVILSNKLNLLLPFGPLAILVHYLTDNKGWFFLLSLVGITPLAERLGYATEQLSCYTGATVGGLLNATFGNVIELIISIIALKNGMIRVVQLTLLGSILSNILLVLGCAFFCGGLVFPGKDQVFDKRNAVVSSGMLLMAVMGLLFPTFLHYTHSEVHAGSSELALSRFISCIMLVAYAAYLFFQLKSQPSFYTEKTNQNEETSNDDEDPEISKWEAIIWLSIFTAWVSLLSGYLVDAIEGTSVSWKIPISFISVILLPIVGNAAEHAGAIMFAMKDKLDLSLGVAIGSSIQISMFAVPFCVVIGWMMGAQMDLNLQLFETATLLITVIVVAFFLQLEGTSNYFKRLMLILCYLIVAASFFVHEDPHQG</sequence>
<evidence type="ECO:0000250" key="1"/>
<evidence type="ECO:0000255" key="2"/>
<evidence type="ECO:0000305" key="3"/>
<name>CAX6_ARATH</name>
<organism>
    <name type="scientific">Arabidopsis thaliana</name>
    <name type="common">Mouse-ear cress</name>
    <dbReference type="NCBI Taxonomy" id="3702"/>
    <lineage>
        <taxon>Eukaryota</taxon>
        <taxon>Viridiplantae</taxon>
        <taxon>Streptophyta</taxon>
        <taxon>Embryophyta</taxon>
        <taxon>Tracheophyta</taxon>
        <taxon>Spermatophyta</taxon>
        <taxon>Magnoliopsida</taxon>
        <taxon>eudicotyledons</taxon>
        <taxon>Gunneridae</taxon>
        <taxon>Pentapetalae</taxon>
        <taxon>rosids</taxon>
        <taxon>malvids</taxon>
        <taxon>Brassicales</taxon>
        <taxon>Brassicaceae</taxon>
        <taxon>Camelineae</taxon>
        <taxon>Arabidopsis</taxon>
    </lineage>
</organism>
<protein>
    <recommendedName>
        <fullName>Putative vacuolar cation/proton exchanger 6</fullName>
    </recommendedName>
    <alternativeName>
        <fullName>Ca(2+)/H(+) antiporter CAX6</fullName>
    </alternativeName>
    <alternativeName>
        <fullName>Ca(2+)/H(+) exchanger 6</fullName>
    </alternativeName>
    <alternativeName>
        <fullName>Protein CATION EXCHANGER 6</fullName>
    </alternativeName>
</protein>
<feature type="chain" id="PRO_0000270155" description="Putative vacuolar cation/proton exchanger 6">
    <location>
        <begin position="1"/>
        <end position="448"/>
    </location>
</feature>
<feature type="topological domain" description="Cytoplasmic" evidence="2">
    <location>
        <begin position="31"/>
        <end position="81"/>
    </location>
</feature>
<feature type="transmembrane region" description="Helical" evidence="2">
    <location>
        <begin position="82"/>
        <end position="102"/>
    </location>
</feature>
<feature type="topological domain" description="Extracellular" evidence="2">
    <location>
        <begin position="103"/>
        <end position="109"/>
    </location>
</feature>
<feature type="transmembrane region" description="Helical" evidence="2">
    <location>
        <begin position="110"/>
        <end position="130"/>
    </location>
</feature>
<feature type="topological domain" description="Cytoplasmic" evidence="2">
    <location>
        <begin position="131"/>
        <end position="141"/>
    </location>
</feature>
<feature type="transmembrane region" description="Helical" evidence="2">
    <location>
        <begin position="142"/>
        <end position="162"/>
    </location>
</feature>
<feature type="topological domain" description="Extracellular" evidence="2">
    <location>
        <begin position="163"/>
        <end position="178"/>
    </location>
</feature>
<feature type="transmembrane region" description="Helical" evidence="2">
    <location>
        <begin position="179"/>
        <end position="199"/>
    </location>
</feature>
<feature type="topological domain" description="Cytoplasmic" evidence="2">
    <location>
        <begin position="200"/>
        <end position="209"/>
    </location>
</feature>
<feature type="transmembrane region" description="Helical" evidence="2">
    <location>
        <begin position="210"/>
        <end position="230"/>
    </location>
</feature>
<feature type="topological domain" description="Extracellular" evidence="2">
    <location>
        <begin position="231"/>
        <end position="243"/>
    </location>
</feature>
<feature type="transmembrane region" description="Helical" evidence="2">
    <location>
        <begin position="244"/>
        <end position="264"/>
    </location>
</feature>
<feature type="topological domain" description="Cytoplasmic" evidence="2">
    <location>
        <begin position="265"/>
        <end position="295"/>
    </location>
</feature>
<feature type="transmembrane region" description="Helical" evidence="2">
    <location>
        <begin position="296"/>
        <end position="316"/>
    </location>
</feature>
<feature type="topological domain" description="Extracellular" evidence="2">
    <location>
        <begin position="317"/>
        <end position="334"/>
    </location>
</feature>
<feature type="transmembrane region" description="Helical" evidence="2">
    <location>
        <begin position="335"/>
        <end position="355"/>
    </location>
</feature>
<feature type="topological domain" description="Cytoplasmic" evidence="2">
    <location>
        <begin position="356"/>
        <end position="363"/>
    </location>
</feature>
<feature type="transmembrane region" description="Helical" evidence="2">
    <location>
        <begin position="364"/>
        <end position="384"/>
    </location>
</feature>
<feature type="topological domain" description="Extracellular" evidence="2">
    <location>
        <begin position="385"/>
        <end position="393"/>
    </location>
</feature>
<feature type="transmembrane region" description="Helical" evidence="2">
    <location>
        <begin position="394"/>
        <end position="414"/>
    </location>
</feature>
<feature type="topological domain" description="Cytoplasmic" evidence="2">
    <location>
        <begin position="415"/>
        <end position="425"/>
    </location>
</feature>
<feature type="transmembrane region" description="Helical" evidence="2">
    <location>
        <begin position="426"/>
        <end position="446"/>
    </location>
</feature>
<feature type="topological domain" description="Extracellular" evidence="2">
    <location>
        <begin position="447"/>
        <end position="448"/>
    </location>
</feature>
<feature type="region of interest" description="Cation selection" evidence="2">
    <location>
        <begin position="150"/>
        <end position="185"/>
    </location>
</feature>
<feature type="region of interest" description="Cation selection" evidence="2">
    <location>
        <begin position="341"/>
        <end position="376"/>
    </location>
</feature>